<reference key="1">
    <citation type="journal article" date="2000" name="Science">
        <title>The genome sequence of Drosophila melanogaster.</title>
        <authorList>
            <person name="Adams M.D."/>
            <person name="Celniker S.E."/>
            <person name="Holt R.A."/>
            <person name="Evans C.A."/>
            <person name="Gocayne J.D."/>
            <person name="Amanatides P.G."/>
            <person name="Scherer S.E."/>
            <person name="Li P.W."/>
            <person name="Hoskins R.A."/>
            <person name="Galle R.F."/>
            <person name="George R.A."/>
            <person name="Lewis S.E."/>
            <person name="Richards S."/>
            <person name="Ashburner M."/>
            <person name="Henderson S.N."/>
            <person name="Sutton G.G."/>
            <person name="Wortman J.R."/>
            <person name="Yandell M.D."/>
            <person name="Zhang Q."/>
            <person name="Chen L.X."/>
            <person name="Brandon R.C."/>
            <person name="Rogers Y.-H.C."/>
            <person name="Blazej R.G."/>
            <person name="Champe M."/>
            <person name="Pfeiffer B.D."/>
            <person name="Wan K.H."/>
            <person name="Doyle C."/>
            <person name="Baxter E.G."/>
            <person name="Helt G."/>
            <person name="Nelson C.R."/>
            <person name="Miklos G.L.G."/>
            <person name="Abril J.F."/>
            <person name="Agbayani A."/>
            <person name="An H.-J."/>
            <person name="Andrews-Pfannkoch C."/>
            <person name="Baldwin D."/>
            <person name="Ballew R.M."/>
            <person name="Basu A."/>
            <person name="Baxendale J."/>
            <person name="Bayraktaroglu L."/>
            <person name="Beasley E.M."/>
            <person name="Beeson K.Y."/>
            <person name="Benos P.V."/>
            <person name="Berman B.P."/>
            <person name="Bhandari D."/>
            <person name="Bolshakov S."/>
            <person name="Borkova D."/>
            <person name="Botchan M.R."/>
            <person name="Bouck J."/>
            <person name="Brokstein P."/>
            <person name="Brottier P."/>
            <person name="Burtis K.C."/>
            <person name="Busam D.A."/>
            <person name="Butler H."/>
            <person name="Cadieu E."/>
            <person name="Center A."/>
            <person name="Chandra I."/>
            <person name="Cherry J.M."/>
            <person name="Cawley S."/>
            <person name="Dahlke C."/>
            <person name="Davenport L.B."/>
            <person name="Davies P."/>
            <person name="de Pablos B."/>
            <person name="Delcher A."/>
            <person name="Deng Z."/>
            <person name="Mays A.D."/>
            <person name="Dew I."/>
            <person name="Dietz S.M."/>
            <person name="Dodson K."/>
            <person name="Doup L.E."/>
            <person name="Downes M."/>
            <person name="Dugan-Rocha S."/>
            <person name="Dunkov B.C."/>
            <person name="Dunn P."/>
            <person name="Durbin K.J."/>
            <person name="Evangelista C.C."/>
            <person name="Ferraz C."/>
            <person name="Ferriera S."/>
            <person name="Fleischmann W."/>
            <person name="Fosler C."/>
            <person name="Gabrielian A.E."/>
            <person name="Garg N.S."/>
            <person name="Gelbart W.M."/>
            <person name="Glasser K."/>
            <person name="Glodek A."/>
            <person name="Gong F."/>
            <person name="Gorrell J.H."/>
            <person name="Gu Z."/>
            <person name="Guan P."/>
            <person name="Harris M."/>
            <person name="Harris N.L."/>
            <person name="Harvey D.A."/>
            <person name="Heiman T.J."/>
            <person name="Hernandez J.R."/>
            <person name="Houck J."/>
            <person name="Hostin D."/>
            <person name="Houston K.A."/>
            <person name="Howland T.J."/>
            <person name="Wei M.-H."/>
            <person name="Ibegwam C."/>
            <person name="Jalali M."/>
            <person name="Kalush F."/>
            <person name="Karpen G.H."/>
            <person name="Ke Z."/>
            <person name="Kennison J.A."/>
            <person name="Ketchum K.A."/>
            <person name="Kimmel B.E."/>
            <person name="Kodira C.D."/>
            <person name="Kraft C.L."/>
            <person name="Kravitz S."/>
            <person name="Kulp D."/>
            <person name="Lai Z."/>
            <person name="Lasko P."/>
            <person name="Lei Y."/>
            <person name="Levitsky A.A."/>
            <person name="Li J.H."/>
            <person name="Li Z."/>
            <person name="Liang Y."/>
            <person name="Lin X."/>
            <person name="Liu X."/>
            <person name="Mattei B."/>
            <person name="McIntosh T.C."/>
            <person name="McLeod M.P."/>
            <person name="McPherson D."/>
            <person name="Merkulov G."/>
            <person name="Milshina N.V."/>
            <person name="Mobarry C."/>
            <person name="Morris J."/>
            <person name="Moshrefi A."/>
            <person name="Mount S.M."/>
            <person name="Moy M."/>
            <person name="Murphy B."/>
            <person name="Murphy L."/>
            <person name="Muzny D.M."/>
            <person name="Nelson D.L."/>
            <person name="Nelson D.R."/>
            <person name="Nelson K.A."/>
            <person name="Nixon K."/>
            <person name="Nusskern D.R."/>
            <person name="Pacleb J.M."/>
            <person name="Palazzolo M."/>
            <person name="Pittman G.S."/>
            <person name="Pan S."/>
            <person name="Pollard J."/>
            <person name="Puri V."/>
            <person name="Reese M.G."/>
            <person name="Reinert K."/>
            <person name="Remington K."/>
            <person name="Saunders R.D.C."/>
            <person name="Scheeler F."/>
            <person name="Shen H."/>
            <person name="Shue B.C."/>
            <person name="Siden-Kiamos I."/>
            <person name="Simpson M."/>
            <person name="Skupski M.P."/>
            <person name="Smith T.J."/>
            <person name="Spier E."/>
            <person name="Spradling A.C."/>
            <person name="Stapleton M."/>
            <person name="Strong R."/>
            <person name="Sun E."/>
            <person name="Svirskas R."/>
            <person name="Tector C."/>
            <person name="Turner R."/>
            <person name="Venter E."/>
            <person name="Wang A.H."/>
            <person name="Wang X."/>
            <person name="Wang Z.-Y."/>
            <person name="Wassarman D.A."/>
            <person name="Weinstock G.M."/>
            <person name="Weissenbach J."/>
            <person name="Williams S.M."/>
            <person name="Woodage T."/>
            <person name="Worley K.C."/>
            <person name="Wu D."/>
            <person name="Yang S."/>
            <person name="Yao Q.A."/>
            <person name="Ye J."/>
            <person name="Yeh R.-F."/>
            <person name="Zaveri J.S."/>
            <person name="Zhan M."/>
            <person name="Zhang G."/>
            <person name="Zhao Q."/>
            <person name="Zheng L."/>
            <person name="Zheng X.H."/>
            <person name="Zhong F.N."/>
            <person name="Zhong W."/>
            <person name="Zhou X."/>
            <person name="Zhu S.C."/>
            <person name="Zhu X."/>
            <person name="Smith H.O."/>
            <person name="Gibbs R.A."/>
            <person name="Myers E.W."/>
            <person name="Rubin G.M."/>
            <person name="Venter J.C."/>
        </authorList>
    </citation>
    <scope>NUCLEOTIDE SEQUENCE [LARGE SCALE GENOMIC DNA]</scope>
    <source>
        <strain>Berkeley</strain>
    </source>
</reference>
<reference key="2">
    <citation type="journal article" date="2002" name="Genome Biol.">
        <title>Annotation of the Drosophila melanogaster euchromatic genome: a systematic review.</title>
        <authorList>
            <person name="Misra S."/>
            <person name="Crosby M.A."/>
            <person name="Mungall C.J."/>
            <person name="Matthews B.B."/>
            <person name="Campbell K.S."/>
            <person name="Hradecky P."/>
            <person name="Huang Y."/>
            <person name="Kaminker J.S."/>
            <person name="Millburn G.H."/>
            <person name="Prochnik S.E."/>
            <person name="Smith C.D."/>
            <person name="Tupy J.L."/>
            <person name="Whitfield E.J."/>
            <person name="Bayraktaroglu L."/>
            <person name="Berman B.P."/>
            <person name="Bettencourt B.R."/>
            <person name="Celniker S.E."/>
            <person name="de Grey A.D.N.J."/>
            <person name="Drysdale R.A."/>
            <person name="Harris N.L."/>
            <person name="Richter J."/>
            <person name="Russo S."/>
            <person name="Schroeder A.J."/>
            <person name="Shu S.Q."/>
            <person name="Stapleton M."/>
            <person name="Yamada C."/>
            <person name="Ashburner M."/>
            <person name="Gelbart W.M."/>
            <person name="Rubin G.M."/>
            <person name="Lewis S.E."/>
        </authorList>
    </citation>
    <scope>GENOME REANNOTATION</scope>
    <source>
        <strain>Berkeley</strain>
    </source>
</reference>
<reference key="3">
    <citation type="journal article" date="2002" name="Genome Biol.">
        <title>A Drosophila full-length cDNA resource.</title>
        <authorList>
            <person name="Stapleton M."/>
            <person name="Carlson J.W."/>
            <person name="Brokstein P."/>
            <person name="Yu C."/>
            <person name="Champe M."/>
            <person name="George R.A."/>
            <person name="Guarin H."/>
            <person name="Kronmiller B."/>
            <person name="Pacleb J.M."/>
            <person name="Park S."/>
            <person name="Wan K.H."/>
            <person name="Rubin G.M."/>
            <person name="Celniker S.E."/>
        </authorList>
    </citation>
    <scope>NUCLEOTIDE SEQUENCE [LARGE SCALE MRNA]</scope>
    <source>
        <strain>Berkeley</strain>
        <tissue>Embryo</tissue>
    </source>
</reference>
<reference key="4">
    <citation type="journal article" date="2000" name="Brain Res.">
        <title>UNCL, the mammalian homologue of UNC-50, is an inner nuclear membrane RNA-binding protein.</title>
        <authorList>
            <person name="Fitzgerald J."/>
            <person name="Kennedy D."/>
            <person name="Viseshakul N."/>
            <person name="Cohen B.N."/>
            <person name="Mattick J."/>
            <person name="Bateman J.F."/>
            <person name="Forsayeth J.R."/>
        </authorList>
    </citation>
    <scope>IDENTIFICATION</scope>
</reference>
<keyword id="KW-0333">Golgi apparatus</keyword>
<keyword id="KW-0472">Membrane</keyword>
<keyword id="KW-1185">Reference proteome</keyword>
<keyword id="KW-0812">Transmembrane</keyword>
<keyword id="KW-1133">Transmembrane helix</keyword>
<proteinExistence type="evidence at transcript level"/>
<accession>Q9VHN5</accession>
<evidence type="ECO:0000250" key="1">
    <source>
        <dbReference type="UniProtKB" id="Q10045"/>
    </source>
</evidence>
<evidence type="ECO:0000255" key="2"/>
<evidence type="ECO:0000256" key="3">
    <source>
        <dbReference type="SAM" id="MobiDB-lite"/>
    </source>
</evidence>
<evidence type="ECO:0000303" key="4">
    <source>
    </source>
</evidence>
<evidence type="ECO:0000305" key="5"/>
<evidence type="ECO:0000312" key="6">
    <source>
        <dbReference type="FlyBase" id="FBgn0037609"/>
    </source>
</evidence>
<comment type="function">
    <text evidence="1">Required for cell surface expression of acetylcholine receptors.</text>
</comment>
<comment type="subcellular location">
    <subcellularLocation>
        <location evidence="1">Golgi apparatus membrane</location>
        <topology evidence="1">Multi-pass membrane protein</topology>
    </subcellularLocation>
</comment>
<comment type="similarity">
    <text evidence="5">Belongs to the unc-50 family.</text>
</comment>
<dbReference type="EMBL" id="AE014297">
    <property type="protein sequence ID" value="AAF54267.1"/>
    <property type="molecule type" value="Genomic_DNA"/>
</dbReference>
<dbReference type="EMBL" id="AY113422">
    <property type="protein sequence ID" value="AAM29427.1"/>
    <property type="molecule type" value="mRNA"/>
</dbReference>
<dbReference type="RefSeq" id="NP_649813.1">
    <property type="nucleotide sequence ID" value="NM_141556.5"/>
</dbReference>
<dbReference type="BioGRID" id="66204">
    <property type="interactions" value="15"/>
</dbReference>
<dbReference type="FunCoup" id="Q9VHN5">
    <property type="interactions" value="2279"/>
</dbReference>
<dbReference type="IntAct" id="Q9VHN5">
    <property type="interactions" value="31"/>
</dbReference>
<dbReference type="STRING" id="7227.FBpp0081434"/>
<dbReference type="GlyGen" id="Q9VHN5">
    <property type="glycosylation" value="1 site"/>
</dbReference>
<dbReference type="PaxDb" id="7227-FBpp0081434"/>
<dbReference type="DNASU" id="41029"/>
<dbReference type="EnsemblMetazoa" id="FBtr0081953">
    <property type="protein sequence ID" value="FBpp0081434"/>
    <property type="gene ID" value="FBgn0037609"/>
</dbReference>
<dbReference type="GeneID" id="41029"/>
<dbReference type="KEGG" id="dme:Dmel_CG9773"/>
<dbReference type="UCSC" id="CG9773-RA">
    <property type="organism name" value="d. melanogaster"/>
</dbReference>
<dbReference type="AGR" id="FB:FBgn0037609"/>
<dbReference type="CTD" id="25972"/>
<dbReference type="FlyBase" id="FBgn0037609">
    <property type="gene designation" value="Unc50"/>
</dbReference>
<dbReference type="VEuPathDB" id="VectorBase:FBgn0037609"/>
<dbReference type="eggNOG" id="KOG3012">
    <property type="taxonomic scope" value="Eukaryota"/>
</dbReference>
<dbReference type="GeneTree" id="ENSGT00390000018553"/>
<dbReference type="HOGENOM" id="CLU_066239_0_0_1"/>
<dbReference type="InParanoid" id="Q9VHN5"/>
<dbReference type="OMA" id="YRNFMYR"/>
<dbReference type="OrthoDB" id="10027013at2759"/>
<dbReference type="PhylomeDB" id="Q9VHN5"/>
<dbReference type="BioGRID-ORCS" id="41029">
    <property type="hits" value="0 hits in 1 CRISPR screen"/>
</dbReference>
<dbReference type="GenomeRNAi" id="41029"/>
<dbReference type="PRO" id="PR:Q9VHN5"/>
<dbReference type="Proteomes" id="UP000000803">
    <property type="component" value="Chromosome 3R"/>
</dbReference>
<dbReference type="Bgee" id="FBgn0037609">
    <property type="expression patterns" value="Expressed in oviduct (Drosophila) and 81 other cell types or tissues"/>
</dbReference>
<dbReference type="GO" id="GO:0000139">
    <property type="term" value="C:Golgi membrane"/>
    <property type="evidence" value="ECO:0000250"/>
    <property type="project" value="FlyBase"/>
</dbReference>
<dbReference type="GO" id="GO:0016192">
    <property type="term" value="P:vesicle-mediated transport"/>
    <property type="evidence" value="ECO:0000250"/>
    <property type="project" value="FlyBase"/>
</dbReference>
<dbReference type="InterPro" id="IPR007881">
    <property type="entry name" value="UNC-50"/>
</dbReference>
<dbReference type="PANTHER" id="PTHR12841">
    <property type="entry name" value="PROTEIN UNC-50 HOMOLOG"/>
    <property type="match status" value="1"/>
</dbReference>
<dbReference type="PANTHER" id="PTHR12841:SF6">
    <property type="entry name" value="PROTEIN UNC-50 HOMOLOG"/>
    <property type="match status" value="1"/>
</dbReference>
<dbReference type="Pfam" id="PF05216">
    <property type="entry name" value="UNC-50"/>
    <property type="match status" value="1"/>
</dbReference>
<sequence length="275" mass="32472">MTQYSHVKYTQSPTPSVVSGYSSASRLHSPLPPPANHRRDCLSATTKSYKYLRRLLKFNQMDFEFALWQMLYLFVAPQKVYRNFNYRKQTKSQFARDDPAFLVLLVVCLCVTSLGFAYVLGLSFWQSISFIFYVVFVDCIFVGIIIASFFWAVTNRYLRTNSLEPDIEWGYAFDVHLNAFFPPLMLLHFIQLFFYNWLISQTWFISRFLGNTFWLMGMGYYVYITFLGYNCIPHLKNTRIILIALPIIFLLFLVVTIIGWNATISFVNFYKYRVY</sequence>
<protein>
    <recommendedName>
        <fullName evidence="4">Protein unc-50 homolog</fullName>
    </recommendedName>
    <alternativeName>
        <fullName evidence="4">Uncoordinated-like protein</fullName>
    </alternativeName>
</protein>
<organism>
    <name type="scientific">Drosophila melanogaster</name>
    <name type="common">Fruit fly</name>
    <dbReference type="NCBI Taxonomy" id="7227"/>
    <lineage>
        <taxon>Eukaryota</taxon>
        <taxon>Metazoa</taxon>
        <taxon>Ecdysozoa</taxon>
        <taxon>Arthropoda</taxon>
        <taxon>Hexapoda</taxon>
        <taxon>Insecta</taxon>
        <taxon>Pterygota</taxon>
        <taxon>Neoptera</taxon>
        <taxon>Endopterygota</taxon>
        <taxon>Diptera</taxon>
        <taxon>Brachycera</taxon>
        <taxon>Muscomorpha</taxon>
        <taxon>Ephydroidea</taxon>
        <taxon>Drosophilidae</taxon>
        <taxon>Drosophila</taxon>
        <taxon>Sophophora</taxon>
    </lineage>
</organism>
<name>UNC50_DROME</name>
<feature type="chain" id="PRO_0000308967" description="Protein unc-50 homolog">
    <location>
        <begin position="1"/>
        <end position="275"/>
    </location>
</feature>
<feature type="topological domain" description="Cytoplasmic" evidence="2">
    <location>
        <begin position="1"/>
        <end position="99"/>
    </location>
</feature>
<feature type="transmembrane region" description="Helical" evidence="2">
    <location>
        <begin position="100"/>
        <end position="120"/>
    </location>
</feature>
<feature type="topological domain" description="Lumenal" evidence="2">
    <location>
        <begin position="121"/>
        <end position="129"/>
    </location>
</feature>
<feature type="transmembrane region" description="Helical" evidence="2">
    <location>
        <begin position="130"/>
        <end position="150"/>
    </location>
</feature>
<feature type="topological domain" description="Cytoplasmic" evidence="2">
    <location>
        <begin position="151"/>
        <end position="178"/>
    </location>
</feature>
<feature type="transmembrane region" description="Helical" evidence="2">
    <location>
        <begin position="179"/>
        <end position="199"/>
    </location>
</feature>
<feature type="topological domain" description="Lumenal" evidence="2">
    <location>
        <begin position="200"/>
        <end position="207"/>
    </location>
</feature>
<feature type="transmembrane region" description="Helical" evidence="2">
    <location>
        <begin position="208"/>
        <end position="228"/>
    </location>
</feature>
<feature type="topological domain" description="Cytoplasmic" evidence="2">
    <location>
        <begin position="229"/>
        <end position="239"/>
    </location>
</feature>
<feature type="transmembrane region" description="Helical" evidence="2">
    <location>
        <begin position="240"/>
        <end position="260"/>
    </location>
</feature>
<feature type="topological domain" description="Lumenal" evidence="2">
    <location>
        <begin position="261"/>
        <end position="275"/>
    </location>
</feature>
<feature type="region of interest" description="Disordered" evidence="3">
    <location>
        <begin position="1"/>
        <end position="39"/>
    </location>
</feature>
<feature type="compositionally biased region" description="Polar residues" evidence="3">
    <location>
        <begin position="1"/>
        <end position="26"/>
    </location>
</feature>
<gene>
    <name evidence="4 6" type="primary">Unc50</name>
    <name evidence="6" type="ORF">CG9773</name>
</gene>